<accession>C3LBW9</accession>
<comment type="subcellular location">
    <subcellularLocation>
        <location evidence="1">Cell membrane</location>
        <topology evidence="1">Multi-pass membrane protein</topology>
    </subcellularLocation>
</comment>
<comment type="similarity">
    <text evidence="1">Belongs to the UPF0344 family.</text>
</comment>
<proteinExistence type="inferred from homology"/>
<sequence length="121" mass="13465">MVHMHITAWALGLILFFVAYSLYSAGRKGKGVHMGLRLMYIIIIVTGFMLYMGIMKTATSNMHMWYGLKMIAGILVIGGMEMVLVKMSKNKATGAVWGLFIVALVAVFYLGLKLPIGWQVF</sequence>
<name>Y3427_BACAC</name>
<organism>
    <name type="scientific">Bacillus anthracis (strain CDC 684 / NRRL 3495)</name>
    <dbReference type="NCBI Taxonomy" id="568206"/>
    <lineage>
        <taxon>Bacteria</taxon>
        <taxon>Bacillati</taxon>
        <taxon>Bacillota</taxon>
        <taxon>Bacilli</taxon>
        <taxon>Bacillales</taxon>
        <taxon>Bacillaceae</taxon>
        <taxon>Bacillus</taxon>
        <taxon>Bacillus cereus group</taxon>
    </lineage>
</organism>
<dbReference type="EMBL" id="CP001215">
    <property type="protein sequence ID" value="ACP14939.1"/>
    <property type="molecule type" value="Genomic_DNA"/>
</dbReference>
<dbReference type="RefSeq" id="WP_000233490.1">
    <property type="nucleotide sequence ID" value="NC_012581.1"/>
</dbReference>
<dbReference type="KEGG" id="bah:BAMEG_3427"/>
<dbReference type="HOGENOM" id="CLU_146641_1_1_9"/>
<dbReference type="GO" id="GO:0005886">
    <property type="term" value="C:plasma membrane"/>
    <property type="evidence" value="ECO:0007669"/>
    <property type="project" value="UniProtKB-SubCell"/>
</dbReference>
<dbReference type="HAMAP" id="MF_01536">
    <property type="entry name" value="UPF0344"/>
    <property type="match status" value="1"/>
</dbReference>
<dbReference type="InterPro" id="IPR010899">
    <property type="entry name" value="UPF0344"/>
</dbReference>
<dbReference type="NCBIfam" id="NF010194">
    <property type="entry name" value="PRK13673.1-1"/>
    <property type="match status" value="1"/>
</dbReference>
<dbReference type="Pfam" id="PF07457">
    <property type="entry name" value="DUF1516"/>
    <property type="match status" value="1"/>
</dbReference>
<feature type="chain" id="PRO_1000185187" description="UPF0344 protein BAMEG_3427">
    <location>
        <begin position="1"/>
        <end position="121"/>
    </location>
</feature>
<feature type="transmembrane region" description="Helical" evidence="1">
    <location>
        <begin position="6"/>
        <end position="26"/>
    </location>
</feature>
<feature type="transmembrane region" description="Helical" evidence="1">
    <location>
        <begin position="38"/>
        <end position="58"/>
    </location>
</feature>
<feature type="transmembrane region" description="Helical" evidence="1">
    <location>
        <begin position="65"/>
        <end position="85"/>
    </location>
</feature>
<feature type="transmembrane region" description="Helical" evidence="1">
    <location>
        <begin position="92"/>
        <end position="112"/>
    </location>
</feature>
<evidence type="ECO:0000255" key="1">
    <source>
        <dbReference type="HAMAP-Rule" id="MF_01536"/>
    </source>
</evidence>
<keyword id="KW-1003">Cell membrane</keyword>
<keyword id="KW-0472">Membrane</keyword>
<keyword id="KW-0812">Transmembrane</keyword>
<keyword id="KW-1133">Transmembrane helix</keyword>
<protein>
    <recommendedName>
        <fullName evidence="1">UPF0344 protein BAMEG_3427</fullName>
    </recommendedName>
</protein>
<reference key="1">
    <citation type="submission" date="2008-10" db="EMBL/GenBank/DDBJ databases">
        <title>Genome sequence of Bacillus anthracis str. CDC 684.</title>
        <authorList>
            <person name="Dodson R.J."/>
            <person name="Munk A.C."/>
            <person name="Brettin T."/>
            <person name="Bruce D."/>
            <person name="Detter C."/>
            <person name="Tapia R."/>
            <person name="Han C."/>
            <person name="Sutton G."/>
            <person name="Sims D."/>
        </authorList>
    </citation>
    <scope>NUCLEOTIDE SEQUENCE [LARGE SCALE GENOMIC DNA]</scope>
    <source>
        <strain>CDC 684 / NRRL 3495</strain>
    </source>
</reference>
<gene>
    <name type="ordered locus">BAMEG_3427</name>
</gene>